<proteinExistence type="inferred from homology"/>
<accession>Q8YMQ0</accession>
<sequence length="520" mass="55465">MDFANLAAQLNAGTILPEGIVIVTLMGVLIVDLILGRTSSRWIGYLAIAGLLAAIVALYFQWDATNPISFTGAFIGDDLSIIFRGIIALSAVVTILMSIRYVEQSGTALAEFIAILLTATLGGMFVSGASELVMIFISLETLSISSYLLTGYTKRDPRSNEAALKYLLIGASSTAVFLYGVSLLYGLSGGQTELNAIANGIITANVGQSLGAVIALVFVIAGIGFKISAAPFHQWTPDVYEGAPTPVIAFLSVGSKAAGFALAIRLLTTVFPFVAEEWKFVFTALAVLSMILGNVVALAQTSMKRMLAYSSIAQAGFVMIGLIAGTDAGYASMIFYLLVYLFMNLCGFTCIILFSLRTGTDQIAEYSGLYQKDPLLTLGLSISLLSLGGIPPLAGFFGKIYLFWAGWQAGLYWLVLLGLVTSVISIYYYIRVVKMMVVKEPQEMSDVVKNYPEIRWNLPGFRPLQVGLVLTLIATSVAGILSNPLFTLANNSVANTAILQATKVVSTQVSAIPAEKPDGL</sequence>
<feature type="chain" id="PRO_0000117683" description="NAD(P)H-quinone oxidoreductase subunit 2">
    <location>
        <begin position="1"/>
        <end position="520"/>
    </location>
</feature>
<feature type="transmembrane region" description="Helical" evidence="1">
    <location>
        <begin position="15"/>
        <end position="35"/>
    </location>
</feature>
<feature type="transmembrane region" description="Helical" evidence="1">
    <location>
        <begin position="42"/>
        <end position="62"/>
    </location>
</feature>
<feature type="transmembrane region" description="Helical" evidence="1">
    <location>
        <begin position="79"/>
        <end position="99"/>
    </location>
</feature>
<feature type="transmembrane region" description="Helical" evidence="1">
    <location>
        <begin position="106"/>
        <end position="126"/>
    </location>
</feature>
<feature type="transmembrane region" description="Helical" evidence="1">
    <location>
        <begin position="132"/>
        <end position="152"/>
    </location>
</feature>
<feature type="transmembrane region" description="Helical" evidence="1">
    <location>
        <begin position="167"/>
        <end position="187"/>
    </location>
</feature>
<feature type="transmembrane region" description="Helical" evidence="1">
    <location>
        <begin position="210"/>
        <end position="230"/>
    </location>
</feature>
<feature type="transmembrane region" description="Helical" evidence="1">
    <location>
        <begin position="244"/>
        <end position="264"/>
    </location>
</feature>
<feature type="transmembrane region" description="Helical" evidence="1">
    <location>
        <begin position="280"/>
        <end position="300"/>
    </location>
</feature>
<feature type="transmembrane region" description="Helical" evidence="1">
    <location>
        <begin position="306"/>
        <end position="326"/>
    </location>
</feature>
<feature type="transmembrane region" description="Helical" evidence="1">
    <location>
        <begin position="334"/>
        <end position="354"/>
    </location>
</feature>
<feature type="transmembrane region" description="Helical" evidence="1">
    <location>
        <begin position="378"/>
        <end position="398"/>
    </location>
</feature>
<feature type="transmembrane region" description="Helical" evidence="1">
    <location>
        <begin position="400"/>
        <end position="420"/>
    </location>
</feature>
<feature type="transmembrane region" description="Helical" evidence="1">
    <location>
        <begin position="466"/>
        <end position="486"/>
    </location>
</feature>
<evidence type="ECO:0000255" key="1">
    <source>
        <dbReference type="HAMAP-Rule" id="MF_00445"/>
    </source>
</evidence>
<organism>
    <name type="scientific">Nostoc sp. (strain PCC 7120 / SAG 25.82 / UTEX 2576)</name>
    <dbReference type="NCBI Taxonomy" id="103690"/>
    <lineage>
        <taxon>Bacteria</taxon>
        <taxon>Bacillati</taxon>
        <taxon>Cyanobacteriota</taxon>
        <taxon>Cyanophyceae</taxon>
        <taxon>Nostocales</taxon>
        <taxon>Nostocaceae</taxon>
        <taxon>Nostoc</taxon>
    </lineage>
</organism>
<comment type="function">
    <text evidence="1">NDH-1 shuttles electrons from an unknown electron donor, via FMN and iron-sulfur (Fe-S) centers, to quinones in the respiratory and/or the photosynthetic chain. The immediate electron acceptor for the enzyme in this species is believed to be plastoquinone. Couples the redox reaction to proton translocation, and thus conserves the redox energy in a proton gradient. Cyanobacterial NDH-1 also plays a role in inorganic carbon-concentration.</text>
</comment>
<comment type="catalytic activity">
    <reaction evidence="1">
        <text>a plastoquinone + NADH + (n+1) H(+)(in) = a plastoquinol + NAD(+) + n H(+)(out)</text>
        <dbReference type="Rhea" id="RHEA:42608"/>
        <dbReference type="Rhea" id="RHEA-COMP:9561"/>
        <dbReference type="Rhea" id="RHEA-COMP:9562"/>
        <dbReference type="ChEBI" id="CHEBI:15378"/>
        <dbReference type="ChEBI" id="CHEBI:17757"/>
        <dbReference type="ChEBI" id="CHEBI:57540"/>
        <dbReference type="ChEBI" id="CHEBI:57945"/>
        <dbReference type="ChEBI" id="CHEBI:62192"/>
    </reaction>
</comment>
<comment type="catalytic activity">
    <reaction evidence="1">
        <text>a plastoquinone + NADPH + (n+1) H(+)(in) = a plastoquinol + NADP(+) + n H(+)(out)</text>
        <dbReference type="Rhea" id="RHEA:42612"/>
        <dbReference type="Rhea" id="RHEA-COMP:9561"/>
        <dbReference type="Rhea" id="RHEA-COMP:9562"/>
        <dbReference type="ChEBI" id="CHEBI:15378"/>
        <dbReference type="ChEBI" id="CHEBI:17757"/>
        <dbReference type="ChEBI" id="CHEBI:57783"/>
        <dbReference type="ChEBI" id="CHEBI:58349"/>
        <dbReference type="ChEBI" id="CHEBI:62192"/>
    </reaction>
</comment>
<comment type="subunit">
    <text evidence="1">NDH-1 can be composed of about 15 different subunits; different subcomplexes with different compositions have been identified which probably have different functions.</text>
</comment>
<comment type="subcellular location">
    <subcellularLocation>
        <location evidence="1">Cellular thylakoid membrane</location>
        <topology evidence="1">Multi-pass membrane protein</topology>
    </subcellularLocation>
</comment>
<comment type="similarity">
    <text evidence="1">Belongs to the complex I subunit 2 family.</text>
</comment>
<dbReference type="EC" id="7.1.1.-" evidence="1"/>
<dbReference type="EMBL" id="BA000019">
    <property type="protein sequence ID" value="BAB76582.1"/>
    <property type="molecule type" value="Genomic_DNA"/>
</dbReference>
<dbReference type="PIR" id="AC2416">
    <property type="entry name" value="AC2416"/>
</dbReference>
<dbReference type="RefSeq" id="WP_010999009.1">
    <property type="nucleotide sequence ID" value="NZ_RSCN01000018.1"/>
</dbReference>
<dbReference type="SMR" id="Q8YMQ0"/>
<dbReference type="STRING" id="103690.gene:10496937"/>
<dbReference type="KEGG" id="ana:all4883"/>
<dbReference type="eggNOG" id="COG1007">
    <property type="taxonomic scope" value="Bacteria"/>
</dbReference>
<dbReference type="OrthoDB" id="9811718at2"/>
<dbReference type="Proteomes" id="UP000002483">
    <property type="component" value="Chromosome"/>
</dbReference>
<dbReference type="GO" id="GO:0031676">
    <property type="term" value="C:plasma membrane-derived thylakoid membrane"/>
    <property type="evidence" value="ECO:0007669"/>
    <property type="project" value="UniProtKB-SubCell"/>
</dbReference>
<dbReference type="GO" id="GO:0008137">
    <property type="term" value="F:NADH dehydrogenase (ubiquinone) activity"/>
    <property type="evidence" value="ECO:0007669"/>
    <property type="project" value="InterPro"/>
</dbReference>
<dbReference type="GO" id="GO:0048038">
    <property type="term" value="F:quinone binding"/>
    <property type="evidence" value="ECO:0007669"/>
    <property type="project" value="UniProtKB-KW"/>
</dbReference>
<dbReference type="GO" id="GO:0042773">
    <property type="term" value="P:ATP synthesis coupled electron transport"/>
    <property type="evidence" value="ECO:0007669"/>
    <property type="project" value="InterPro"/>
</dbReference>
<dbReference type="GO" id="GO:0019684">
    <property type="term" value="P:photosynthesis, light reaction"/>
    <property type="evidence" value="ECO:0007669"/>
    <property type="project" value="UniProtKB-UniRule"/>
</dbReference>
<dbReference type="HAMAP" id="MF_00445">
    <property type="entry name" value="NDH1_NuoN_1"/>
    <property type="match status" value="1"/>
</dbReference>
<dbReference type="InterPro" id="IPR010096">
    <property type="entry name" value="NADH-Q_OxRdtase_suN/2"/>
</dbReference>
<dbReference type="InterPro" id="IPR001750">
    <property type="entry name" value="ND/Mrp_TM"/>
</dbReference>
<dbReference type="InterPro" id="IPR045693">
    <property type="entry name" value="Ndh2_N"/>
</dbReference>
<dbReference type="NCBIfam" id="TIGR01770">
    <property type="entry name" value="NDH_I_N"/>
    <property type="match status" value="1"/>
</dbReference>
<dbReference type="NCBIfam" id="NF002701">
    <property type="entry name" value="PRK02504.1"/>
    <property type="match status" value="1"/>
</dbReference>
<dbReference type="PANTHER" id="PTHR22773">
    <property type="entry name" value="NADH DEHYDROGENASE"/>
    <property type="match status" value="1"/>
</dbReference>
<dbReference type="Pfam" id="PF19530">
    <property type="entry name" value="Ndh2_N"/>
    <property type="match status" value="1"/>
</dbReference>
<dbReference type="Pfam" id="PF00361">
    <property type="entry name" value="Proton_antipo_M"/>
    <property type="match status" value="1"/>
</dbReference>
<dbReference type="PRINTS" id="PR01434">
    <property type="entry name" value="NADHDHGNASE5"/>
</dbReference>
<name>NU2C_NOSS1</name>
<protein>
    <recommendedName>
        <fullName evidence="1">NAD(P)H-quinone oxidoreductase subunit 2</fullName>
        <ecNumber evidence="1">7.1.1.-</ecNumber>
    </recommendedName>
    <alternativeName>
        <fullName evidence="1">NAD(P)H dehydrogenase subunit 2</fullName>
    </alternativeName>
    <alternativeName>
        <fullName evidence="1">NADH-plastoquinone oxidoreductase subunit 2</fullName>
    </alternativeName>
    <alternativeName>
        <fullName evidence="1">NDH-1, subunit 2</fullName>
    </alternativeName>
</protein>
<reference key="1">
    <citation type="journal article" date="2001" name="DNA Res.">
        <title>Complete genomic sequence of the filamentous nitrogen-fixing cyanobacterium Anabaena sp. strain PCC 7120.</title>
        <authorList>
            <person name="Kaneko T."/>
            <person name="Nakamura Y."/>
            <person name="Wolk C.P."/>
            <person name="Kuritz T."/>
            <person name="Sasamoto S."/>
            <person name="Watanabe A."/>
            <person name="Iriguchi M."/>
            <person name="Ishikawa A."/>
            <person name="Kawashima K."/>
            <person name="Kimura T."/>
            <person name="Kishida Y."/>
            <person name="Kohara M."/>
            <person name="Matsumoto M."/>
            <person name="Matsuno A."/>
            <person name="Muraki A."/>
            <person name="Nakazaki N."/>
            <person name="Shimpo S."/>
            <person name="Sugimoto M."/>
            <person name="Takazawa M."/>
            <person name="Yamada M."/>
            <person name="Yasuda M."/>
            <person name="Tabata S."/>
        </authorList>
    </citation>
    <scope>NUCLEOTIDE SEQUENCE [LARGE SCALE GENOMIC DNA]</scope>
    <source>
        <strain>PCC 7120 / SAG 25.82 / UTEX 2576</strain>
    </source>
</reference>
<gene>
    <name evidence="1" type="primary">ndhB</name>
    <name type="ordered locus">all4883</name>
</gene>
<keyword id="KW-0472">Membrane</keyword>
<keyword id="KW-0520">NAD</keyword>
<keyword id="KW-0521">NADP</keyword>
<keyword id="KW-0618">Plastoquinone</keyword>
<keyword id="KW-0874">Quinone</keyword>
<keyword id="KW-1185">Reference proteome</keyword>
<keyword id="KW-0793">Thylakoid</keyword>
<keyword id="KW-1278">Translocase</keyword>
<keyword id="KW-0812">Transmembrane</keyword>
<keyword id="KW-1133">Transmembrane helix</keyword>
<keyword id="KW-0813">Transport</keyword>